<organism>
    <name type="scientific">Escherichia coli (strain ATCC 8739 / DSM 1576 / NBRC 3972 / NCIMB 8545 / WDCM 00012 / Crooks)</name>
    <dbReference type="NCBI Taxonomy" id="481805"/>
    <lineage>
        <taxon>Bacteria</taxon>
        <taxon>Pseudomonadati</taxon>
        <taxon>Pseudomonadota</taxon>
        <taxon>Gammaproteobacteria</taxon>
        <taxon>Enterobacterales</taxon>
        <taxon>Enterobacteriaceae</taxon>
        <taxon>Escherichia</taxon>
    </lineage>
</organism>
<feature type="chain" id="PRO_1000083066" description="1,4-alpha-glucan branching enzyme GlgB">
    <location>
        <begin position="1"/>
        <end position="728"/>
    </location>
</feature>
<feature type="active site" description="Nucleophile" evidence="1">
    <location>
        <position position="405"/>
    </location>
</feature>
<feature type="active site" description="Proton donor" evidence="1">
    <location>
        <position position="458"/>
    </location>
</feature>
<dbReference type="EC" id="2.4.1.18" evidence="1"/>
<dbReference type="EMBL" id="CP000946">
    <property type="protein sequence ID" value="ACA75958.1"/>
    <property type="molecule type" value="Genomic_DNA"/>
</dbReference>
<dbReference type="RefSeq" id="WP_001283723.1">
    <property type="nucleotide sequence ID" value="NZ_MTFT01000001.1"/>
</dbReference>
<dbReference type="SMR" id="B1IP32"/>
<dbReference type="CAZy" id="CBM48">
    <property type="family name" value="Carbohydrate-Binding Module Family 48"/>
</dbReference>
<dbReference type="CAZy" id="GH13">
    <property type="family name" value="Glycoside Hydrolase Family 13"/>
</dbReference>
<dbReference type="GeneID" id="93778557"/>
<dbReference type="KEGG" id="ecl:EcolC_0280"/>
<dbReference type="HOGENOM" id="CLU_004245_3_2_6"/>
<dbReference type="UniPathway" id="UPA00164"/>
<dbReference type="GO" id="GO:0005829">
    <property type="term" value="C:cytosol"/>
    <property type="evidence" value="ECO:0007669"/>
    <property type="project" value="TreeGrafter"/>
</dbReference>
<dbReference type="GO" id="GO:0003844">
    <property type="term" value="F:1,4-alpha-glucan branching enzyme activity"/>
    <property type="evidence" value="ECO:0007669"/>
    <property type="project" value="UniProtKB-UniRule"/>
</dbReference>
<dbReference type="GO" id="GO:0043169">
    <property type="term" value="F:cation binding"/>
    <property type="evidence" value="ECO:0007669"/>
    <property type="project" value="InterPro"/>
</dbReference>
<dbReference type="GO" id="GO:0004553">
    <property type="term" value="F:hydrolase activity, hydrolyzing O-glycosyl compounds"/>
    <property type="evidence" value="ECO:0007669"/>
    <property type="project" value="InterPro"/>
</dbReference>
<dbReference type="GO" id="GO:0005978">
    <property type="term" value="P:glycogen biosynthetic process"/>
    <property type="evidence" value="ECO:0007669"/>
    <property type="project" value="UniProtKB-UniRule"/>
</dbReference>
<dbReference type="CDD" id="cd11322">
    <property type="entry name" value="AmyAc_Glg_BE"/>
    <property type="match status" value="1"/>
</dbReference>
<dbReference type="CDD" id="cd02855">
    <property type="entry name" value="E_set_GBE_prok_N"/>
    <property type="match status" value="1"/>
</dbReference>
<dbReference type="FunFam" id="2.60.40.10:FF:000169">
    <property type="entry name" value="1,4-alpha-glucan branching enzyme GlgB"/>
    <property type="match status" value="1"/>
</dbReference>
<dbReference type="FunFam" id="2.60.40.10:FF:000331">
    <property type="entry name" value="1,4-alpha-glucan branching enzyme GlgB"/>
    <property type="match status" value="1"/>
</dbReference>
<dbReference type="FunFam" id="2.60.40.1180:FF:000002">
    <property type="entry name" value="1,4-alpha-glucan branching enzyme GlgB"/>
    <property type="match status" value="1"/>
</dbReference>
<dbReference type="FunFam" id="3.20.20.80:FF:000003">
    <property type="entry name" value="1,4-alpha-glucan branching enzyme GlgB"/>
    <property type="match status" value="1"/>
</dbReference>
<dbReference type="Gene3D" id="3.20.20.80">
    <property type="entry name" value="Glycosidases"/>
    <property type="match status" value="1"/>
</dbReference>
<dbReference type="Gene3D" id="2.60.40.1180">
    <property type="entry name" value="Golgi alpha-mannosidase II"/>
    <property type="match status" value="1"/>
</dbReference>
<dbReference type="Gene3D" id="2.60.40.10">
    <property type="entry name" value="Immunoglobulins"/>
    <property type="match status" value="2"/>
</dbReference>
<dbReference type="HAMAP" id="MF_00685">
    <property type="entry name" value="GlgB"/>
    <property type="match status" value="1"/>
</dbReference>
<dbReference type="InterPro" id="IPR006048">
    <property type="entry name" value="A-amylase/branching_C"/>
</dbReference>
<dbReference type="InterPro" id="IPR037439">
    <property type="entry name" value="Branching_enzy"/>
</dbReference>
<dbReference type="InterPro" id="IPR006407">
    <property type="entry name" value="GlgB"/>
</dbReference>
<dbReference type="InterPro" id="IPR054169">
    <property type="entry name" value="GlgB_N"/>
</dbReference>
<dbReference type="InterPro" id="IPR044143">
    <property type="entry name" value="GlgB_N_E_set_prok"/>
</dbReference>
<dbReference type="InterPro" id="IPR006047">
    <property type="entry name" value="Glyco_hydro_13_cat_dom"/>
</dbReference>
<dbReference type="InterPro" id="IPR004193">
    <property type="entry name" value="Glyco_hydro_13_N"/>
</dbReference>
<dbReference type="InterPro" id="IPR013780">
    <property type="entry name" value="Glyco_hydro_b"/>
</dbReference>
<dbReference type="InterPro" id="IPR017853">
    <property type="entry name" value="Glycoside_hydrolase_SF"/>
</dbReference>
<dbReference type="InterPro" id="IPR013783">
    <property type="entry name" value="Ig-like_fold"/>
</dbReference>
<dbReference type="InterPro" id="IPR014756">
    <property type="entry name" value="Ig_E-set"/>
</dbReference>
<dbReference type="NCBIfam" id="TIGR01515">
    <property type="entry name" value="branching_enzym"/>
    <property type="match status" value="1"/>
</dbReference>
<dbReference type="NCBIfam" id="NF003811">
    <property type="entry name" value="PRK05402.1"/>
    <property type="match status" value="1"/>
</dbReference>
<dbReference type="NCBIfam" id="NF008967">
    <property type="entry name" value="PRK12313.1"/>
    <property type="match status" value="1"/>
</dbReference>
<dbReference type="PANTHER" id="PTHR43651">
    <property type="entry name" value="1,4-ALPHA-GLUCAN-BRANCHING ENZYME"/>
    <property type="match status" value="1"/>
</dbReference>
<dbReference type="PANTHER" id="PTHR43651:SF3">
    <property type="entry name" value="1,4-ALPHA-GLUCAN-BRANCHING ENZYME"/>
    <property type="match status" value="1"/>
</dbReference>
<dbReference type="Pfam" id="PF00128">
    <property type="entry name" value="Alpha-amylase"/>
    <property type="match status" value="1"/>
</dbReference>
<dbReference type="Pfam" id="PF02806">
    <property type="entry name" value="Alpha-amylase_C"/>
    <property type="match status" value="1"/>
</dbReference>
<dbReference type="Pfam" id="PF02922">
    <property type="entry name" value="CBM_48"/>
    <property type="match status" value="1"/>
</dbReference>
<dbReference type="Pfam" id="PF22019">
    <property type="entry name" value="GlgB_N"/>
    <property type="match status" value="1"/>
</dbReference>
<dbReference type="PIRSF" id="PIRSF000463">
    <property type="entry name" value="GlgB"/>
    <property type="match status" value="1"/>
</dbReference>
<dbReference type="SMART" id="SM00642">
    <property type="entry name" value="Aamy"/>
    <property type="match status" value="1"/>
</dbReference>
<dbReference type="SUPFAM" id="SSF51445">
    <property type="entry name" value="(Trans)glycosidases"/>
    <property type="match status" value="1"/>
</dbReference>
<dbReference type="SUPFAM" id="SSF81296">
    <property type="entry name" value="E set domains"/>
    <property type="match status" value="2"/>
</dbReference>
<dbReference type="SUPFAM" id="SSF51011">
    <property type="entry name" value="Glycosyl hydrolase domain"/>
    <property type="match status" value="1"/>
</dbReference>
<evidence type="ECO:0000255" key="1">
    <source>
        <dbReference type="HAMAP-Rule" id="MF_00685"/>
    </source>
</evidence>
<proteinExistence type="inferred from homology"/>
<protein>
    <recommendedName>
        <fullName evidence="1">1,4-alpha-glucan branching enzyme GlgB</fullName>
        <ecNumber evidence="1">2.4.1.18</ecNumber>
    </recommendedName>
    <alternativeName>
        <fullName evidence="1">1,4-alpha-D-glucan:1,4-alpha-D-glucan 6-glucosyl-transferase</fullName>
    </alternativeName>
    <alternativeName>
        <fullName evidence="1">Alpha-(1-&gt;4)-glucan branching enzyme</fullName>
    </alternativeName>
    <alternativeName>
        <fullName evidence="1">Glycogen branching enzyme</fullName>
        <shortName evidence="1">BE</shortName>
    </alternativeName>
</protein>
<sequence length="728" mass="84337">MSDRIDRDVINALIAGHFADPFSVLGMHKTTAGLEVRALLPDATDVWVIEPKTGRKLAKLECLDSRGFFSGVIPRRKNFFRYQLAVVWHGQQNLIDDPYRFGPLIQEMDAWLLSEGTHLRPYETLGAHADTMDGVTGTRFSVWAPNARRVSVVGQFNYWDGRRHPMRLRKESGIWELFIPGAHNGQLYKYEMIDANGNLRLKSDPYAFEAQMRPETASLICGLPEKVVQTEERKKANQFDAPISIYEVHLGSWRRHTDNNFWLSYRELADQLVPYAKWMGFTHLELLPINEHPFDGSWGYQPTGLYAPTRRFGTRDDFRYFIDAAHAAGLNVILDWVPGHFPTDDFALAEFDGTNLYEHSDPREGYHQDWNTLIYNYGRREVSNFLVGNALYWIERFGIDALRVDAVASMIYRDYSRKEGEWIPNEFGGRENLEAIEFLRNTNRILGEQVSGAVTMAEESTDFPGVSRPQDMGGLGFWYKWNLGWMHDTLDYMKLDPVYRQYHHDKLTFGILYNYTENFVLPLSHDEVVHGKKSILDRMPGDAWQKFANLRAYYGWMWAFPGKKLLFMGNEFAQGREWNHDASLDWHLLEGGDNWHHGVQRLVRDLNLTYRHHKAMHELDFDPYGFEWLVVDDKERSVLIFVRRDKEGNEIIVASNFTPVPRHDYRFGINQPGKWREILNTDSMHYHGSNAGNGGTVHSDEIASHGRQHSLSLTLPPLATIWLVREAE</sequence>
<accession>B1IP32</accession>
<name>GLGB_ECOLC</name>
<reference key="1">
    <citation type="submission" date="2008-02" db="EMBL/GenBank/DDBJ databases">
        <title>Complete sequence of Escherichia coli C str. ATCC 8739.</title>
        <authorList>
            <person name="Copeland A."/>
            <person name="Lucas S."/>
            <person name="Lapidus A."/>
            <person name="Glavina del Rio T."/>
            <person name="Dalin E."/>
            <person name="Tice H."/>
            <person name="Bruce D."/>
            <person name="Goodwin L."/>
            <person name="Pitluck S."/>
            <person name="Kiss H."/>
            <person name="Brettin T."/>
            <person name="Detter J.C."/>
            <person name="Han C."/>
            <person name="Kuske C.R."/>
            <person name="Schmutz J."/>
            <person name="Larimer F."/>
            <person name="Land M."/>
            <person name="Hauser L."/>
            <person name="Kyrpides N."/>
            <person name="Mikhailova N."/>
            <person name="Ingram L."/>
            <person name="Richardson P."/>
        </authorList>
    </citation>
    <scope>NUCLEOTIDE SEQUENCE [LARGE SCALE GENOMIC DNA]</scope>
    <source>
        <strain>ATCC 8739 / DSM 1576 / NBRC 3972 / NCIMB 8545 / WDCM 00012 / Crooks</strain>
    </source>
</reference>
<gene>
    <name evidence="1" type="primary">glgB</name>
    <name type="ordered locus">EcolC_0280</name>
</gene>
<comment type="function">
    <text evidence="1">Catalyzes the formation of the alpha-1,6-glucosidic linkages in glycogen by scission of a 1,4-alpha-linked oligosaccharide from growing alpha-1,4-glucan chains and the subsequent attachment of the oligosaccharide to the alpha-1,6 position.</text>
</comment>
<comment type="catalytic activity">
    <reaction evidence="1">
        <text>Transfers a segment of a (1-&gt;4)-alpha-D-glucan chain to a primary hydroxy group in a similar glucan chain.</text>
        <dbReference type="EC" id="2.4.1.18"/>
    </reaction>
</comment>
<comment type="pathway">
    <text evidence="1">Glycan biosynthesis; glycogen biosynthesis.</text>
</comment>
<comment type="subunit">
    <text evidence="1">Monomer.</text>
</comment>
<comment type="similarity">
    <text evidence="1">Belongs to the glycosyl hydrolase 13 family. GlgB subfamily.</text>
</comment>
<keyword id="KW-0119">Carbohydrate metabolism</keyword>
<keyword id="KW-0320">Glycogen biosynthesis</keyword>
<keyword id="KW-0321">Glycogen metabolism</keyword>
<keyword id="KW-0328">Glycosyltransferase</keyword>
<keyword id="KW-0808">Transferase</keyword>